<feature type="chain" id="PRO_1000164994" description="Putative N-acetylmannosamine-6-phosphate 2-epimerase">
    <location>
        <begin position="1"/>
        <end position="224"/>
    </location>
</feature>
<proteinExistence type="inferred from homology"/>
<dbReference type="EC" id="5.1.3.9" evidence="1"/>
<dbReference type="EMBL" id="AM295250">
    <property type="protein sequence ID" value="CAL29295.1"/>
    <property type="molecule type" value="Genomic_DNA"/>
</dbReference>
<dbReference type="SMR" id="B9DIJ5"/>
<dbReference type="KEGG" id="sca:SCA_2392"/>
<dbReference type="eggNOG" id="COG3010">
    <property type="taxonomic scope" value="Bacteria"/>
</dbReference>
<dbReference type="HOGENOM" id="CLU_086300_1_0_9"/>
<dbReference type="OrthoDB" id="9781704at2"/>
<dbReference type="BioCyc" id="SCAR396513:SCA_RS12025-MONOMER"/>
<dbReference type="UniPathway" id="UPA00629">
    <property type="reaction ID" value="UER00682"/>
</dbReference>
<dbReference type="Proteomes" id="UP000000444">
    <property type="component" value="Chromosome"/>
</dbReference>
<dbReference type="GO" id="GO:0005829">
    <property type="term" value="C:cytosol"/>
    <property type="evidence" value="ECO:0007669"/>
    <property type="project" value="TreeGrafter"/>
</dbReference>
<dbReference type="GO" id="GO:0047465">
    <property type="term" value="F:N-acylglucosamine-6-phosphate 2-epimerase activity"/>
    <property type="evidence" value="ECO:0007669"/>
    <property type="project" value="UniProtKB-EC"/>
</dbReference>
<dbReference type="GO" id="GO:0005975">
    <property type="term" value="P:carbohydrate metabolic process"/>
    <property type="evidence" value="ECO:0007669"/>
    <property type="project" value="UniProtKB-UniRule"/>
</dbReference>
<dbReference type="GO" id="GO:0006053">
    <property type="term" value="P:N-acetylmannosamine catabolic process"/>
    <property type="evidence" value="ECO:0007669"/>
    <property type="project" value="TreeGrafter"/>
</dbReference>
<dbReference type="GO" id="GO:0019262">
    <property type="term" value="P:N-acetylneuraminate catabolic process"/>
    <property type="evidence" value="ECO:0007669"/>
    <property type="project" value="UniProtKB-UniRule"/>
</dbReference>
<dbReference type="CDD" id="cd04729">
    <property type="entry name" value="NanE"/>
    <property type="match status" value="1"/>
</dbReference>
<dbReference type="FunFam" id="3.20.20.70:FF:000035">
    <property type="entry name" value="Putative N-acetylmannosamine-6-phosphate 2-epimerase"/>
    <property type="match status" value="1"/>
</dbReference>
<dbReference type="Gene3D" id="3.20.20.70">
    <property type="entry name" value="Aldolase class I"/>
    <property type="match status" value="1"/>
</dbReference>
<dbReference type="HAMAP" id="MF_01235">
    <property type="entry name" value="ManNAc6P_epimer"/>
    <property type="match status" value="1"/>
</dbReference>
<dbReference type="InterPro" id="IPR013785">
    <property type="entry name" value="Aldolase_TIM"/>
</dbReference>
<dbReference type="InterPro" id="IPR007260">
    <property type="entry name" value="NanE"/>
</dbReference>
<dbReference type="InterPro" id="IPR011060">
    <property type="entry name" value="RibuloseP-bd_barrel"/>
</dbReference>
<dbReference type="NCBIfam" id="NF002231">
    <property type="entry name" value="PRK01130.1"/>
    <property type="match status" value="1"/>
</dbReference>
<dbReference type="PANTHER" id="PTHR36204">
    <property type="entry name" value="N-ACETYLMANNOSAMINE-6-PHOSPHATE 2-EPIMERASE-RELATED"/>
    <property type="match status" value="1"/>
</dbReference>
<dbReference type="PANTHER" id="PTHR36204:SF1">
    <property type="entry name" value="N-ACETYLMANNOSAMINE-6-PHOSPHATE 2-EPIMERASE-RELATED"/>
    <property type="match status" value="1"/>
</dbReference>
<dbReference type="Pfam" id="PF04131">
    <property type="entry name" value="NanE"/>
    <property type="match status" value="1"/>
</dbReference>
<dbReference type="SUPFAM" id="SSF51366">
    <property type="entry name" value="Ribulose-phoshate binding barrel"/>
    <property type="match status" value="1"/>
</dbReference>
<accession>B9DIJ5</accession>
<organism>
    <name type="scientific">Staphylococcus carnosus (strain TM300)</name>
    <dbReference type="NCBI Taxonomy" id="396513"/>
    <lineage>
        <taxon>Bacteria</taxon>
        <taxon>Bacillati</taxon>
        <taxon>Bacillota</taxon>
        <taxon>Bacilli</taxon>
        <taxon>Bacillales</taxon>
        <taxon>Staphylococcaceae</taxon>
        <taxon>Staphylococcus</taxon>
    </lineage>
</organism>
<keyword id="KW-0119">Carbohydrate metabolism</keyword>
<keyword id="KW-0413">Isomerase</keyword>
<keyword id="KW-1185">Reference proteome</keyword>
<comment type="function">
    <text evidence="1">Converts N-acetylmannosamine-6-phosphate (ManNAc-6-P) to N-acetylglucosamine-6-phosphate (GlcNAc-6-P).</text>
</comment>
<comment type="catalytic activity">
    <reaction evidence="1">
        <text>an N-acyl-D-glucosamine 6-phosphate = an N-acyl-D-mannosamine 6-phosphate</text>
        <dbReference type="Rhea" id="RHEA:23932"/>
        <dbReference type="ChEBI" id="CHEBI:57599"/>
        <dbReference type="ChEBI" id="CHEBI:57666"/>
        <dbReference type="EC" id="5.1.3.9"/>
    </reaction>
</comment>
<comment type="pathway">
    <text evidence="1">Amino-sugar metabolism; N-acetylneuraminate degradation; D-fructose 6-phosphate from N-acetylneuraminate: step 3/5.</text>
</comment>
<comment type="similarity">
    <text evidence="1">Belongs to the NanE family.</text>
</comment>
<reference key="1">
    <citation type="journal article" date="2009" name="Appl. Environ. Microbiol.">
        <title>Genome analysis of the meat starter culture bacterium Staphylococcus carnosus TM300.</title>
        <authorList>
            <person name="Rosenstein R."/>
            <person name="Nerz C."/>
            <person name="Biswas L."/>
            <person name="Resch A."/>
            <person name="Raddatz G."/>
            <person name="Schuster S.C."/>
            <person name="Goetz F."/>
        </authorList>
    </citation>
    <scope>NUCLEOTIDE SEQUENCE [LARGE SCALE GENOMIC DNA]</scope>
    <source>
        <strain>TM300</strain>
    </source>
</reference>
<sequence>MLPQGLIVSCQALPDEPLHSSFIMSKLALAAYEGGAVGIRANTKEDIEAIKTEVPLPVIGIVKRDYEGSDVFITATSKEVDELIESGCEVIALDATKQKRPKETLEELVTYIRKHAPNVEIMADISTVEEAVNADKLGFDYVGTTLRGYTSYTKGHILFEDDFAFLKEVLDKVNAKVIAEGNVITPEMYQTVSNLGVYCTVVGGAITRPKQITERFVQAAKDQS</sequence>
<gene>
    <name evidence="1" type="primary">nanE</name>
    <name type="ordered locus">Sca_2392</name>
</gene>
<protein>
    <recommendedName>
        <fullName evidence="1">Putative N-acetylmannosamine-6-phosphate 2-epimerase</fullName>
        <ecNumber evidence="1">5.1.3.9</ecNumber>
    </recommendedName>
    <alternativeName>
        <fullName evidence="1">ManNAc-6-P epimerase</fullName>
    </alternativeName>
</protein>
<evidence type="ECO:0000255" key="1">
    <source>
        <dbReference type="HAMAP-Rule" id="MF_01235"/>
    </source>
</evidence>
<name>NANE_STACT</name>